<gene>
    <name type="primary">Zfp14</name>
    <name type="synonym">Kiaa1559</name>
    <name type="synonym">Krox-9</name>
    <name type="synonym">Zfp-14</name>
</gene>
<protein>
    <recommendedName>
        <fullName>Zinc finger protein 14</fullName>
        <shortName>Zfp-14</shortName>
    </recommendedName>
    <alternativeName>
        <fullName>Zinc finger protein Krox-9</fullName>
    </alternativeName>
</protein>
<reference key="1">
    <citation type="journal article" date="2005" name="Science">
        <title>The transcriptional landscape of the mammalian genome.</title>
        <authorList>
            <person name="Carninci P."/>
            <person name="Kasukawa T."/>
            <person name="Katayama S."/>
            <person name="Gough J."/>
            <person name="Frith M.C."/>
            <person name="Maeda N."/>
            <person name="Oyama R."/>
            <person name="Ravasi T."/>
            <person name="Lenhard B."/>
            <person name="Wells C."/>
            <person name="Kodzius R."/>
            <person name="Shimokawa K."/>
            <person name="Bajic V.B."/>
            <person name="Brenner S.E."/>
            <person name="Batalov S."/>
            <person name="Forrest A.R."/>
            <person name="Zavolan M."/>
            <person name="Davis M.J."/>
            <person name="Wilming L.G."/>
            <person name="Aidinis V."/>
            <person name="Allen J.E."/>
            <person name="Ambesi-Impiombato A."/>
            <person name="Apweiler R."/>
            <person name="Aturaliya R.N."/>
            <person name="Bailey T.L."/>
            <person name="Bansal M."/>
            <person name="Baxter L."/>
            <person name="Beisel K.W."/>
            <person name="Bersano T."/>
            <person name="Bono H."/>
            <person name="Chalk A.M."/>
            <person name="Chiu K.P."/>
            <person name="Choudhary V."/>
            <person name="Christoffels A."/>
            <person name="Clutterbuck D.R."/>
            <person name="Crowe M.L."/>
            <person name="Dalla E."/>
            <person name="Dalrymple B.P."/>
            <person name="de Bono B."/>
            <person name="Della Gatta G."/>
            <person name="di Bernardo D."/>
            <person name="Down T."/>
            <person name="Engstrom P."/>
            <person name="Fagiolini M."/>
            <person name="Faulkner G."/>
            <person name="Fletcher C.F."/>
            <person name="Fukushima T."/>
            <person name="Furuno M."/>
            <person name="Futaki S."/>
            <person name="Gariboldi M."/>
            <person name="Georgii-Hemming P."/>
            <person name="Gingeras T.R."/>
            <person name="Gojobori T."/>
            <person name="Green R.E."/>
            <person name="Gustincich S."/>
            <person name="Harbers M."/>
            <person name="Hayashi Y."/>
            <person name="Hensch T.K."/>
            <person name="Hirokawa N."/>
            <person name="Hill D."/>
            <person name="Huminiecki L."/>
            <person name="Iacono M."/>
            <person name="Ikeo K."/>
            <person name="Iwama A."/>
            <person name="Ishikawa T."/>
            <person name="Jakt M."/>
            <person name="Kanapin A."/>
            <person name="Katoh M."/>
            <person name="Kawasawa Y."/>
            <person name="Kelso J."/>
            <person name="Kitamura H."/>
            <person name="Kitano H."/>
            <person name="Kollias G."/>
            <person name="Krishnan S.P."/>
            <person name="Kruger A."/>
            <person name="Kummerfeld S.K."/>
            <person name="Kurochkin I.V."/>
            <person name="Lareau L.F."/>
            <person name="Lazarevic D."/>
            <person name="Lipovich L."/>
            <person name="Liu J."/>
            <person name="Liuni S."/>
            <person name="McWilliam S."/>
            <person name="Madan Babu M."/>
            <person name="Madera M."/>
            <person name="Marchionni L."/>
            <person name="Matsuda H."/>
            <person name="Matsuzawa S."/>
            <person name="Miki H."/>
            <person name="Mignone F."/>
            <person name="Miyake S."/>
            <person name="Morris K."/>
            <person name="Mottagui-Tabar S."/>
            <person name="Mulder N."/>
            <person name="Nakano N."/>
            <person name="Nakauchi H."/>
            <person name="Ng P."/>
            <person name="Nilsson R."/>
            <person name="Nishiguchi S."/>
            <person name="Nishikawa S."/>
            <person name="Nori F."/>
            <person name="Ohara O."/>
            <person name="Okazaki Y."/>
            <person name="Orlando V."/>
            <person name="Pang K.C."/>
            <person name="Pavan W.J."/>
            <person name="Pavesi G."/>
            <person name="Pesole G."/>
            <person name="Petrovsky N."/>
            <person name="Piazza S."/>
            <person name="Reed J."/>
            <person name="Reid J.F."/>
            <person name="Ring B.Z."/>
            <person name="Ringwald M."/>
            <person name="Rost B."/>
            <person name="Ruan Y."/>
            <person name="Salzberg S.L."/>
            <person name="Sandelin A."/>
            <person name="Schneider C."/>
            <person name="Schoenbach C."/>
            <person name="Sekiguchi K."/>
            <person name="Semple C.A."/>
            <person name="Seno S."/>
            <person name="Sessa L."/>
            <person name="Sheng Y."/>
            <person name="Shibata Y."/>
            <person name="Shimada H."/>
            <person name="Shimada K."/>
            <person name="Silva D."/>
            <person name="Sinclair B."/>
            <person name="Sperling S."/>
            <person name="Stupka E."/>
            <person name="Sugiura K."/>
            <person name="Sultana R."/>
            <person name="Takenaka Y."/>
            <person name="Taki K."/>
            <person name="Tammoja K."/>
            <person name="Tan S.L."/>
            <person name="Tang S."/>
            <person name="Taylor M.S."/>
            <person name="Tegner J."/>
            <person name="Teichmann S.A."/>
            <person name="Ueda H.R."/>
            <person name="van Nimwegen E."/>
            <person name="Verardo R."/>
            <person name="Wei C.L."/>
            <person name="Yagi K."/>
            <person name="Yamanishi H."/>
            <person name="Zabarovsky E."/>
            <person name="Zhu S."/>
            <person name="Zimmer A."/>
            <person name="Hide W."/>
            <person name="Bult C."/>
            <person name="Grimmond S.M."/>
            <person name="Teasdale R.D."/>
            <person name="Liu E.T."/>
            <person name="Brusic V."/>
            <person name="Quackenbush J."/>
            <person name="Wahlestedt C."/>
            <person name="Mattick J.S."/>
            <person name="Hume D.A."/>
            <person name="Kai C."/>
            <person name="Sasaki D."/>
            <person name="Tomaru Y."/>
            <person name="Fukuda S."/>
            <person name="Kanamori-Katayama M."/>
            <person name="Suzuki M."/>
            <person name="Aoki J."/>
            <person name="Arakawa T."/>
            <person name="Iida J."/>
            <person name="Imamura K."/>
            <person name="Itoh M."/>
            <person name="Kato T."/>
            <person name="Kawaji H."/>
            <person name="Kawagashira N."/>
            <person name="Kawashima T."/>
            <person name="Kojima M."/>
            <person name="Kondo S."/>
            <person name="Konno H."/>
            <person name="Nakano K."/>
            <person name="Ninomiya N."/>
            <person name="Nishio T."/>
            <person name="Okada M."/>
            <person name="Plessy C."/>
            <person name="Shibata K."/>
            <person name="Shiraki T."/>
            <person name="Suzuki S."/>
            <person name="Tagami M."/>
            <person name="Waki K."/>
            <person name="Watahiki A."/>
            <person name="Okamura-Oho Y."/>
            <person name="Suzuki H."/>
            <person name="Kawai J."/>
            <person name="Hayashizaki Y."/>
        </authorList>
    </citation>
    <scope>NUCLEOTIDE SEQUENCE [LARGE SCALE MRNA]</scope>
    <source>
        <strain>C57BL/6J</strain>
        <tissue>Olfactory bulb</tissue>
        <tissue>Skin</tissue>
    </source>
</reference>
<reference key="2">
    <citation type="submission" date="2005-02" db="EMBL/GenBank/DDBJ databases">
        <title>Prediction of the coding sequences of mouse homologues of KIAA gene. The complete nucleotide sequences of mouse KIAA-homologous cDNAs identified by screening of terminal sequences of cDNA clones randomly sampled from size-fractionated libraries.</title>
        <authorList>
            <person name="Okazaki N."/>
            <person name="Kikuno R.F."/>
            <person name="Ohara R."/>
            <person name="Inamoto S."/>
            <person name="Nagase T."/>
            <person name="Ohara O."/>
            <person name="Koga H."/>
        </authorList>
    </citation>
    <scope>NUCLEOTIDE SEQUENCE [LARGE SCALE MRNA]</scope>
    <source>
        <tissue>Fetal brain</tissue>
    </source>
</reference>
<reference key="3">
    <citation type="journal article" date="2004" name="Genome Res.">
        <title>The status, quality, and expansion of the NIH full-length cDNA project: the Mammalian Gene Collection (MGC).</title>
        <authorList>
            <consortium name="The MGC Project Team"/>
        </authorList>
    </citation>
    <scope>NUCLEOTIDE SEQUENCE [LARGE SCALE MRNA]</scope>
    <source>
        <strain>C57BL/6J</strain>
        <tissue>Brain</tissue>
    </source>
</reference>
<reference key="4">
    <citation type="journal article" date="1988" name="Mol. Cell. Biol.">
        <title>Characterization of a mouse multigene family that encodes zinc finger structures.</title>
        <authorList>
            <person name="Chavrier P."/>
            <person name="Lemaire P."/>
            <person name="Revelant O."/>
            <person name="Bravo R."/>
            <person name="Charnay P."/>
        </authorList>
    </citation>
    <scope>NUCLEOTIDE SEQUENCE [GENOMIC DNA] OF 381-467</scope>
</reference>
<organism>
    <name type="scientific">Mus musculus</name>
    <name type="common">Mouse</name>
    <dbReference type="NCBI Taxonomy" id="10090"/>
    <lineage>
        <taxon>Eukaryota</taxon>
        <taxon>Metazoa</taxon>
        <taxon>Chordata</taxon>
        <taxon>Craniata</taxon>
        <taxon>Vertebrata</taxon>
        <taxon>Euteleostomi</taxon>
        <taxon>Mammalia</taxon>
        <taxon>Eutheria</taxon>
        <taxon>Euarchontoglires</taxon>
        <taxon>Glires</taxon>
        <taxon>Rodentia</taxon>
        <taxon>Myomorpha</taxon>
        <taxon>Muroidea</taxon>
        <taxon>Muridae</taxon>
        <taxon>Murinae</taxon>
        <taxon>Mus</taxon>
        <taxon>Mus</taxon>
    </lineage>
</organism>
<keyword id="KW-0238">DNA-binding</keyword>
<keyword id="KW-0479">Metal-binding</keyword>
<keyword id="KW-0539">Nucleus</keyword>
<keyword id="KW-1185">Reference proteome</keyword>
<keyword id="KW-0677">Repeat</keyword>
<keyword id="KW-0862">Zinc</keyword>
<keyword id="KW-0863">Zinc-finger</keyword>
<feature type="chain" id="PRO_0000047286" description="Zinc finger protein 14">
    <location>
        <begin position="1"/>
        <end position="501"/>
    </location>
</feature>
<feature type="domain" description="KRAB" evidence="2">
    <location>
        <begin position="8"/>
        <end position="80"/>
    </location>
</feature>
<feature type="zinc finger region" description="C2H2-type 1" evidence="1">
    <location>
        <begin position="140"/>
        <end position="162"/>
    </location>
</feature>
<feature type="zinc finger region" description="C2H2-type 2" evidence="1">
    <location>
        <begin position="168"/>
        <end position="190"/>
    </location>
</feature>
<feature type="zinc finger region" description="C2H2-type 3" evidence="1">
    <location>
        <begin position="196"/>
        <end position="218"/>
    </location>
</feature>
<feature type="zinc finger region" description="C2H2-type 4" evidence="1">
    <location>
        <begin position="224"/>
        <end position="246"/>
    </location>
</feature>
<feature type="zinc finger region" description="C2H2-type 5" evidence="1">
    <location>
        <begin position="252"/>
        <end position="274"/>
    </location>
</feature>
<feature type="zinc finger region" description="C2H2-type 6" evidence="1">
    <location>
        <begin position="280"/>
        <end position="302"/>
    </location>
</feature>
<feature type="zinc finger region" description="C2H2-type 7" evidence="1">
    <location>
        <begin position="308"/>
        <end position="330"/>
    </location>
</feature>
<feature type="zinc finger region" description="C2H2-type 8" evidence="1">
    <location>
        <begin position="336"/>
        <end position="358"/>
    </location>
</feature>
<feature type="zinc finger region" description="C2H2-type 9" evidence="1">
    <location>
        <begin position="364"/>
        <end position="386"/>
    </location>
</feature>
<feature type="zinc finger region" description="C2H2-type 10" evidence="1">
    <location>
        <begin position="392"/>
        <end position="414"/>
    </location>
</feature>
<feature type="zinc finger region" description="C2H2-type 11" evidence="1">
    <location>
        <begin position="420"/>
        <end position="442"/>
    </location>
</feature>
<feature type="zinc finger region" description="C2H2-type 12" evidence="1">
    <location>
        <begin position="448"/>
        <end position="470"/>
    </location>
</feature>
<feature type="zinc finger region" description="C2H2-type 13" evidence="1">
    <location>
        <begin position="476"/>
        <end position="498"/>
    </location>
</feature>
<feature type="sequence conflict" description="In Ref. 2; BAD90454." evidence="3" ref="2">
    <original>G</original>
    <variation>E</variation>
    <location>
        <position position="136"/>
    </location>
</feature>
<evidence type="ECO:0000255" key="1">
    <source>
        <dbReference type="PROSITE-ProRule" id="PRU00042"/>
    </source>
</evidence>
<evidence type="ECO:0000255" key="2">
    <source>
        <dbReference type="PROSITE-ProRule" id="PRU00119"/>
    </source>
</evidence>
<evidence type="ECO:0000305" key="3"/>
<name>ZFP14_MOUSE</name>
<sequence>MALAQGLVTFGDVAVDFSQEEWEFLDPAQKNLYRDVMWETYSNFISLDLESRFKTDTSSSDKGICEVYSLQWELIEKIKNLSPQGSGLSDDQECKHKTGLQKEPQEGYFGQLKITSEKVTYEKHSFLSEYQRVQNGEKFYECKECRKTFIRRSTLSQHLRIHTGEKPYKCKECGQPFRQRAHLIRHHKLHTGEKPYECKDCGKAFTVLQELTQHQRLHTGEKPYECKECGKAFRVHQQLARHQRIHTGEKPYECKECGKTFRQCTHLTRHQRLHTSEKLYECKECGKAFVCGPDLRVHQKIHFGEKPYACKDCGKSFRICQQLTVHQSIHTGEKPYECKECGKTFRLRQQLVRHQRIHTHERPYECLECWKTFSSYSQLISHQSIHVGERPYECEECGKAFRLLSQLTQHQSIHTGEKPYECQECRKPFRLLSQLTQHRSIHTGEKPYECKDCGKAFRLYSFLSQHQRIHTGEKPYKCKECKKAFRQHSHLTQHQKIHSGT</sequence>
<proteinExistence type="evidence at transcript level"/>
<comment type="function">
    <text>May be involved in transcriptional regulation.</text>
</comment>
<comment type="subcellular location">
    <subcellularLocation>
        <location evidence="3">Nucleus</location>
    </subcellularLocation>
</comment>
<comment type="similarity">
    <text evidence="3">Belongs to the krueppel C2H2-type zinc-finger protein family.</text>
</comment>
<comment type="sequence caution" evidence="3">
    <conflict type="erroneous initiation">
        <sequence resource="EMBL-CDS" id="BAD90454"/>
    </conflict>
</comment>
<accession>P10755</accession>
<accession>Q5DTW6</accession>
<accession>Q8BFZ5</accession>
<dbReference type="EMBL" id="AK028663">
    <property type="protein sequence ID" value="BAC26053.1"/>
    <property type="molecule type" value="mRNA"/>
</dbReference>
<dbReference type="EMBL" id="AK032214">
    <property type="protein sequence ID" value="BAC27763.1"/>
    <property type="molecule type" value="mRNA"/>
</dbReference>
<dbReference type="EMBL" id="AK220404">
    <property type="protein sequence ID" value="BAD90454.1"/>
    <property type="status" value="ALT_INIT"/>
    <property type="molecule type" value="mRNA"/>
</dbReference>
<dbReference type="EMBL" id="BC066057">
    <property type="protein sequence ID" value="AAH66057.1"/>
    <property type="molecule type" value="mRNA"/>
</dbReference>
<dbReference type="EMBL" id="M20758">
    <property type="protein sequence ID" value="AAA39389.1"/>
    <property type="molecule type" value="Genomic_DNA"/>
</dbReference>
<dbReference type="CCDS" id="CCDS39875.1"/>
<dbReference type="PIR" id="F29942">
    <property type="entry name" value="F29942"/>
</dbReference>
<dbReference type="RefSeq" id="NP_001345789.1">
    <property type="nucleotide sequence ID" value="NM_001358860.1"/>
</dbReference>
<dbReference type="RefSeq" id="NP_035878.1">
    <property type="nucleotide sequence ID" value="NM_011748.2"/>
</dbReference>
<dbReference type="RefSeq" id="NP_848848.1">
    <property type="nucleotide sequence ID" value="NM_178733.5"/>
</dbReference>
<dbReference type="RefSeq" id="XP_006540012.1">
    <property type="nucleotide sequence ID" value="XM_006539949.3"/>
</dbReference>
<dbReference type="RefSeq" id="XP_017177726.1">
    <property type="nucleotide sequence ID" value="XM_017322237.1"/>
</dbReference>
<dbReference type="RefSeq" id="XP_030098427.1">
    <property type="nucleotide sequence ID" value="XM_030242567.2"/>
</dbReference>
<dbReference type="RefSeq" id="XP_036008978.1">
    <property type="nucleotide sequence ID" value="XM_036153085.1"/>
</dbReference>
<dbReference type="RefSeq" id="XP_036008979.1">
    <property type="nucleotide sequence ID" value="XM_036153086.1"/>
</dbReference>
<dbReference type="RefSeq" id="XP_036008981.1">
    <property type="nucleotide sequence ID" value="XM_036153088.1"/>
</dbReference>
<dbReference type="RefSeq" id="XP_036008982.1">
    <property type="nucleotide sequence ID" value="XM_036153089.1"/>
</dbReference>
<dbReference type="RefSeq" id="XP_036008983.1">
    <property type="nucleotide sequence ID" value="XM_036153090.1"/>
</dbReference>
<dbReference type="RefSeq" id="XP_036008984.1">
    <property type="nucleotide sequence ID" value="XM_036153091.1"/>
</dbReference>
<dbReference type="RefSeq" id="XP_036008985.1">
    <property type="nucleotide sequence ID" value="XM_036153092.1"/>
</dbReference>
<dbReference type="RefSeq" id="XP_036008986.1">
    <property type="nucleotide sequence ID" value="XM_036153093.1"/>
</dbReference>
<dbReference type="RefSeq" id="XP_036008987.1">
    <property type="nucleotide sequence ID" value="XM_036153094.1"/>
</dbReference>
<dbReference type="SMR" id="P10755"/>
<dbReference type="STRING" id="10090.ENSMUSP00000146824"/>
<dbReference type="iPTMnet" id="P10755"/>
<dbReference type="PhosphoSitePlus" id="P10755"/>
<dbReference type="PaxDb" id="10090-ENSMUSP00000076960"/>
<dbReference type="Antibodypedia" id="29750">
    <property type="antibodies" value="84 antibodies from 16 providers"/>
</dbReference>
<dbReference type="DNASU" id="243906"/>
<dbReference type="Ensembl" id="ENSMUST00000077787.8">
    <property type="protein sequence ID" value="ENSMUSP00000076960.8"/>
    <property type="gene ID" value="ENSMUSG00000053985.11"/>
</dbReference>
<dbReference type="Ensembl" id="ENSMUST00000207072.2">
    <property type="protein sequence ID" value="ENSMUSP00000146913.2"/>
    <property type="gene ID" value="ENSMUSG00000053985.11"/>
</dbReference>
<dbReference type="Ensembl" id="ENSMUST00000207873.2">
    <property type="protein sequence ID" value="ENSMUSP00000146824.2"/>
    <property type="gene ID" value="ENSMUSG00000053985.11"/>
</dbReference>
<dbReference type="GeneID" id="243906"/>
<dbReference type="KEGG" id="mmu:243906"/>
<dbReference type="UCSC" id="uc009gcw.1">
    <property type="organism name" value="mouse"/>
</dbReference>
<dbReference type="AGR" id="MGI:99160"/>
<dbReference type="CTD" id="57677"/>
<dbReference type="MGI" id="MGI:99160">
    <property type="gene designation" value="Zfp14"/>
</dbReference>
<dbReference type="VEuPathDB" id="HostDB:ENSMUSG00000053985"/>
<dbReference type="eggNOG" id="KOG1721">
    <property type="taxonomic scope" value="Eukaryota"/>
</dbReference>
<dbReference type="GeneTree" id="ENSGT00940000162016"/>
<dbReference type="HOGENOM" id="CLU_002678_0_9_1"/>
<dbReference type="InParanoid" id="P10755"/>
<dbReference type="OMA" id="YECVECW"/>
<dbReference type="OrthoDB" id="6591996at2759"/>
<dbReference type="PhylomeDB" id="P10755"/>
<dbReference type="TreeFam" id="TF341817"/>
<dbReference type="Reactome" id="R-MMU-212436">
    <property type="pathway name" value="Generic Transcription Pathway"/>
</dbReference>
<dbReference type="BioGRID-ORCS" id="243906">
    <property type="hits" value="2 hits in 77 CRISPR screens"/>
</dbReference>
<dbReference type="ChiTaRS" id="Zfp14">
    <property type="organism name" value="mouse"/>
</dbReference>
<dbReference type="PRO" id="PR:P10755"/>
<dbReference type="Proteomes" id="UP000000589">
    <property type="component" value="Chromosome 7"/>
</dbReference>
<dbReference type="RNAct" id="P10755">
    <property type="molecule type" value="protein"/>
</dbReference>
<dbReference type="Bgee" id="ENSMUSG00000053985">
    <property type="expression patterns" value="Expressed in cortical plate and 152 other cell types or tissues"/>
</dbReference>
<dbReference type="GO" id="GO:0005634">
    <property type="term" value="C:nucleus"/>
    <property type="evidence" value="ECO:0007669"/>
    <property type="project" value="UniProtKB-SubCell"/>
</dbReference>
<dbReference type="GO" id="GO:0003677">
    <property type="term" value="F:DNA binding"/>
    <property type="evidence" value="ECO:0007669"/>
    <property type="project" value="UniProtKB-KW"/>
</dbReference>
<dbReference type="GO" id="GO:0008270">
    <property type="term" value="F:zinc ion binding"/>
    <property type="evidence" value="ECO:0007669"/>
    <property type="project" value="UniProtKB-KW"/>
</dbReference>
<dbReference type="GO" id="GO:0001835">
    <property type="term" value="P:blastocyst hatching"/>
    <property type="evidence" value="ECO:0000315"/>
    <property type="project" value="MGI"/>
</dbReference>
<dbReference type="GO" id="GO:0006355">
    <property type="term" value="P:regulation of DNA-templated transcription"/>
    <property type="evidence" value="ECO:0007669"/>
    <property type="project" value="InterPro"/>
</dbReference>
<dbReference type="CDD" id="cd07765">
    <property type="entry name" value="KRAB_A-box"/>
    <property type="match status" value="1"/>
</dbReference>
<dbReference type="FunFam" id="3.30.160.60:FF:000111">
    <property type="entry name" value="GLI family zinc finger 4"/>
    <property type="match status" value="1"/>
</dbReference>
<dbReference type="FunFam" id="3.30.160.60:FF:000020">
    <property type="entry name" value="Zinc finger protein 14 homolog"/>
    <property type="match status" value="4"/>
</dbReference>
<dbReference type="FunFam" id="3.30.160.60:FF:000295">
    <property type="entry name" value="zinc finger protein 19"/>
    <property type="match status" value="1"/>
</dbReference>
<dbReference type="FunFam" id="3.30.160.60:FF:000561">
    <property type="entry name" value="Zinc finger protein 30 homolog"/>
    <property type="match status" value="1"/>
</dbReference>
<dbReference type="FunFam" id="3.30.160.60:FF:000434">
    <property type="entry name" value="zinc finger protein 30 homolog"/>
    <property type="match status" value="1"/>
</dbReference>
<dbReference type="FunFam" id="3.30.160.60:FF:002254">
    <property type="entry name" value="Zinc finger protein 540"/>
    <property type="match status" value="1"/>
</dbReference>
<dbReference type="FunFam" id="3.30.160.60:FF:000737">
    <property type="entry name" value="Zinc finger protein 565"/>
    <property type="match status" value="1"/>
</dbReference>
<dbReference type="FunFam" id="3.30.160.60:FF:001270">
    <property type="entry name" value="zinc finger protein 583 isoform X1"/>
    <property type="match status" value="2"/>
</dbReference>
<dbReference type="FunFam" id="3.30.160.60:FF:000416">
    <property type="entry name" value="zinc finger protein 879 isoform X1"/>
    <property type="match status" value="1"/>
</dbReference>
<dbReference type="Gene3D" id="6.10.140.140">
    <property type="match status" value="1"/>
</dbReference>
<dbReference type="Gene3D" id="3.30.160.60">
    <property type="entry name" value="Classic Zinc Finger"/>
    <property type="match status" value="13"/>
</dbReference>
<dbReference type="InterPro" id="IPR001909">
    <property type="entry name" value="KRAB"/>
</dbReference>
<dbReference type="InterPro" id="IPR036051">
    <property type="entry name" value="KRAB_dom_sf"/>
</dbReference>
<dbReference type="InterPro" id="IPR050758">
    <property type="entry name" value="Znf_C2H2-type"/>
</dbReference>
<dbReference type="InterPro" id="IPR036236">
    <property type="entry name" value="Znf_C2H2_sf"/>
</dbReference>
<dbReference type="InterPro" id="IPR013087">
    <property type="entry name" value="Znf_C2H2_type"/>
</dbReference>
<dbReference type="PANTHER" id="PTHR23234:SF10">
    <property type="entry name" value="RIKEN CDNA 6720489N17 GENE-RELATED"/>
    <property type="match status" value="1"/>
</dbReference>
<dbReference type="PANTHER" id="PTHR23234">
    <property type="entry name" value="ZNF44 PROTEIN"/>
    <property type="match status" value="1"/>
</dbReference>
<dbReference type="Pfam" id="PF01352">
    <property type="entry name" value="KRAB"/>
    <property type="match status" value="1"/>
</dbReference>
<dbReference type="Pfam" id="PF00096">
    <property type="entry name" value="zf-C2H2"/>
    <property type="match status" value="12"/>
</dbReference>
<dbReference type="Pfam" id="PF13912">
    <property type="entry name" value="zf-C2H2_6"/>
    <property type="match status" value="1"/>
</dbReference>
<dbReference type="SMART" id="SM00349">
    <property type="entry name" value="KRAB"/>
    <property type="match status" value="1"/>
</dbReference>
<dbReference type="SMART" id="SM00355">
    <property type="entry name" value="ZnF_C2H2"/>
    <property type="match status" value="13"/>
</dbReference>
<dbReference type="SUPFAM" id="SSF57667">
    <property type="entry name" value="beta-beta-alpha zinc fingers"/>
    <property type="match status" value="7"/>
</dbReference>
<dbReference type="SUPFAM" id="SSF109640">
    <property type="entry name" value="KRAB domain (Kruppel-associated box)"/>
    <property type="match status" value="1"/>
</dbReference>
<dbReference type="PROSITE" id="PS50805">
    <property type="entry name" value="KRAB"/>
    <property type="match status" value="1"/>
</dbReference>
<dbReference type="PROSITE" id="PS00028">
    <property type="entry name" value="ZINC_FINGER_C2H2_1"/>
    <property type="match status" value="13"/>
</dbReference>
<dbReference type="PROSITE" id="PS50157">
    <property type="entry name" value="ZINC_FINGER_C2H2_2"/>
    <property type="match status" value="13"/>
</dbReference>